<feature type="chain" id="PRO_0000457907" description="Multiple C2 domain and transmembrane region protein 13">
    <location>
        <begin position="1"/>
        <end position="745"/>
    </location>
</feature>
<feature type="transmembrane region" description="Helical" evidence="1">
    <location>
        <begin position="568"/>
        <end position="588"/>
    </location>
</feature>
<feature type="transmembrane region" description="Helical" evidence="1">
    <location>
        <begin position="688"/>
        <end position="708"/>
    </location>
</feature>
<feature type="domain" description="C2 1" evidence="2">
    <location>
        <begin position="21"/>
        <end position="139"/>
    </location>
</feature>
<feature type="domain" description="C2 2" evidence="2">
    <location>
        <begin position="171"/>
        <end position="293"/>
    </location>
</feature>
<feature type="domain" description="C2 3" evidence="2">
    <location>
        <begin position="326"/>
        <end position="453"/>
    </location>
</feature>
<feature type="region of interest" description="Disordered" evidence="3">
    <location>
        <begin position="1"/>
        <end position="30"/>
    </location>
</feature>
<feature type="binding site" evidence="2">
    <location>
        <position position="56"/>
    </location>
    <ligand>
        <name>Ca(2+)</name>
        <dbReference type="ChEBI" id="CHEBI:29108"/>
        <label>1</label>
    </ligand>
</feature>
<feature type="binding site" evidence="2">
    <location>
        <position position="56"/>
    </location>
    <ligand>
        <name>Ca(2+)</name>
        <dbReference type="ChEBI" id="CHEBI:29108"/>
        <label>2</label>
    </ligand>
</feature>
<feature type="binding site" evidence="2">
    <location>
        <position position="61"/>
    </location>
    <ligand>
        <name>Ca(2+)</name>
        <dbReference type="ChEBI" id="CHEBI:29108"/>
        <label>1</label>
    </ligand>
</feature>
<feature type="binding site" evidence="2">
    <location>
        <position position="106"/>
    </location>
    <ligand>
        <name>Ca(2+)</name>
        <dbReference type="ChEBI" id="CHEBI:29108"/>
        <label>1</label>
    </ligand>
</feature>
<feature type="binding site" evidence="2">
    <location>
        <position position="106"/>
    </location>
    <ligand>
        <name>Ca(2+)</name>
        <dbReference type="ChEBI" id="CHEBI:29108"/>
        <label>2</label>
    </ligand>
</feature>
<feature type="binding site" evidence="2">
    <location>
        <position position="110"/>
    </location>
    <ligand>
        <name>Ca(2+)</name>
        <dbReference type="ChEBI" id="CHEBI:29108"/>
        <label>2</label>
    </ligand>
</feature>
<name>MCT13_ARATH</name>
<dbReference type="EMBL" id="AL162751">
    <property type="protein sequence ID" value="CAB83301.1"/>
    <property type="molecule type" value="Genomic_DNA"/>
</dbReference>
<dbReference type="EMBL" id="CP002688">
    <property type="protein sequence ID" value="AED90603.1"/>
    <property type="molecule type" value="Genomic_DNA"/>
</dbReference>
<dbReference type="PIR" id="T48366">
    <property type="entry name" value="T48366"/>
</dbReference>
<dbReference type="RefSeq" id="NP_001318468.1">
    <property type="nucleotide sequence ID" value="NM_001342703.1"/>
</dbReference>
<dbReference type="SMR" id="Q9LZE5"/>
<dbReference type="FunCoup" id="Q9LZE5">
    <property type="interactions" value="196"/>
</dbReference>
<dbReference type="STRING" id="3702.Q9LZE5"/>
<dbReference type="PaxDb" id="3702-AT5G03435.1"/>
<dbReference type="EnsemblPlants" id="AT5G03435.1">
    <property type="protein sequence ID" value="AT5G03435.1"/>
    <property type="gene ID" value="AT5G03435"/>
</dbReference>
<dbReference type="GeneID" id="831834"/>
<dbReference type="Gramene" id="AT5G03435.1">
    <property type="protein sequence ID" value="AT5G03435.1"/>
    <property type="gene ID" value="AT5G03435"/>
</dbReference>
<dbReference type="KEGG" id="ath:AT5G03435"/>
<dbReference type="Araport" id="AT5G03435"/>
<dbReference type="TAIR" id="AT5G03435">
    <property type="gene designation" value="MCTP13"/>
</dbReference>
<dbReference type="eggNOG" id="ENOG502R77N">
    <property type="taxonomic scope" value="Eukaryota"/>
</dbReference>
<dbReference type="HOGENOM" id="CLU_003762_1_0_1"/>
<dbReference type="InParanoid" id="Q9LZE5"/>
<dbReference type="OMA" id="WKLESPN"/>
<dbReference type="PRO" id="PR:Q9LZE5"/>
<dbReference type="Proteomes" id="UP000006548">
    <property type="component" value="Chromosome 5"/>
</dbReference>
<dbReference type="ExpressionAtlas" id="Q9LZE5">
    <property type="expression patterns" value="baseline and differential"/>
</dbReference>
<dbReference type="GO" id="GO:0005829">
    <property type="term" value="C:cytosol"/>
    <property type="evidence" value="ECO:0000314"/>
    <property type="project" value="TAIR"/>
</dbReference>
<dbReference type="GO" id="GO:0005886">
    <property type="term" value="C:plasma membrane"/>
    <property type="evidence" value="ECO:0007669"/>
    <property type="project" value="UniProtKB-SubCell"/>
</dbReference>
<dbReference type="GO" id="GO:0046872">
    <property type="term" value="F:metal ion binding"/>
    <property type="evidence" value="ECO:0007669"/>
    <property type="project" value="UniProtKB-KW"/>
</dbReference>
<dbReference type="CDD" id="cd08379">
    <property type="entry name" value="C2D_MCTP_PRT_plant"/>
    <property type="match status" value="1"/>
</dbReference>
<dbReference type="FunFam" id="2.60.40.150:FF:000090">
    <property type="entry name" value="C2 domain-containing protein"/>
    <property type="match status" value="1"/>
</dbReference>
<dbReference type="FunFam" id="2.60.40.150:FF:000565">
    <property type="entry name" value="Ca2+dependent plant phosphoribosyltransferase family protein"/>
    <property type="match status" value="1"/>
</dbReference>
<dbReference type="Gene3D" id="2.60.40.150">
    <property type="entry name" value="C2 domain"/>
    <property type="match status" value="3"/>
</dbReference>
<dbReference type="InterPro" id="IPR000008">
    <property type="entry name" value="C2_dom"/>
</dbReference>
<dbReference type="InterPro" id="IPR035892">
    <property type="entry name" value="C2_domain_sf"/>
</dbReference>
<dbReference type="InterPro" id="IPR047255">
    <property type="entry name" value="C2D_MCTP_PRT_plant"/>
</dbReference>
<dbReference type="InterPro" id="IPR013583">
    <property type="entry name" value="MCTP_C"/>
</dbReference>
<dbReference type="InterPro" id="IPR047259">
    <property type="entry name" value="QUIRKY-like"/>
</dbReference>
<dbReference type="PANTHER" id="PTHR31425:SF45">
    <property type="entry name" value="MULTIPLE C2 DOMAIN AND TRANSMEMBRANE REGION PROTEIN 12-RELATED"/>
    <property type="match status" value="1"/>
</dbReference>
<dbReference type="PANTHER" id="PTHR31425">
    <property type="entry name" value="PHOSPHORIBOSYLANTHRANILATE TRANSFERASE ISOFORM 1"/>
    <property type="match status" value="1"/>
</dbReference>
<dbReference type="Pfam" id="PF00168">
    <property type="entry name" value="C2"/>
    <property type="match status" value="3"/>
</dbReference>
<dbReference type="Pfam" id="PF08372">
    <property type="entry name" value="PRT_C"/>
    <property type="match status" value="1"/>
</dbReference>
<dbReference type="SMART" id="SM00239">
    <property type="entry name" value="C2"/>
    <property type="match status" value="3"/>
</dbReference>
<dbReference type="SUPFAM" id="SSF49562">
    <property type="entry name" value="C2 domain (Calcium/lipid-binding domain, CaLB)"/>
    <property type="match status" value="3"/>
</dbReference>
<dbReference type="PROSITE" id="PS50004">
    <property type="entry name" value="C2"/>
    <property type="match status" value="3"/>
</dbReference>
<sequence length="745" mass="85042">MAANKDEFSVKQISPKLGGERGARNPYGPTSLHDLVEQMEFLYVDVIRAIKNSDVDPGPCDPVVEITLGNYKSSTKDLPVGPNMDWNQVFAFDKTKGDVLSVTLKDRLTNTVINKSNFKLASEIPTRAPPDARIAPQRYPLRNTKTGFYLMMSVWFGTQVDEVYPVAWFSDASEVSTCVINTRPKVYLAPRLCYVRVTIVSGHDLISTDRNRTPSVYVTATLGQVTLKTEVSSGTNPSWNKDLIFVASEPLEGTVYIRLIDRVDDQHEERIIGKLEKKLSEMTPLKVPSSAPALFYDIEVEPAGDSRRFASRLKMKLATDQAYHVAEESIQYSSDYRPFVKGLWPCLLGKLEIGILGATGLKGSDERKQGIDSYVVAKYGNKWARTRTVVNSVTPKWNEQYSWDDYEKCTVLTLGIYDNRQIFKEDQANDVPIGKVRISLNRVESDWIYACSYPILKLGSSGLKKMGELQLAVRFVYVAQGYARYSAPFRWLLPKAHYKSPLSVYQIEEMRAEAVKINCANLARTEPALRNEVVWDMLKPKTNTRYSTCDMRKVAALAFFDLFLYWPSLIVWLAIYLVVVPCIVLVGLSGLHKFLTRKFWNKRENPRSPLIVNDLKLWKLESPNLDELEEEFDSFPSSVSDVNILRMRYDRIRMVCQRPMILLGDAASQGERLYALLTFNGDDQLASFYCWLICVLVALCWYNIPMWLWSLYPIAYWLNFTPLRNDMPCGVSNFFRRLPTNEVLF</sequence>
<gene>
    <name evidence="5" type="primary">MCTP13</name>
    <name evidence="7" type="ordered locus">At5g03435</name>
    <name evidence="8" type="ORF">F12E4.180</name>
</gene>
<protein>
    <recommendedName>
        <fullName evidence="5">Multiple C2 domain and transmembrane region protein 13</fullName>
    </recommendedName>
</protein>
<keyword id="KW-0106">Calcium</keyword>
<keyword id="KW-1003">Cell membrane</keyword>
<keyword id="KW-0963">Cytoplasm</keyword>
<keyword id="KW-0472">Membrane</keyword>
<keyword id="KW-0479">Metal-binding</keyword>
<keyword id="KW-1185">Reference proteome</keyword>
<keyword id="KW-0677">Repeat</keyword>
<keyword id="KW-0812">Transmembrane</keyword>
<keyword id="KW-1133">Transmembrane helix</keyword>
<comment type="function">
    <text evidence="5">May function as a signaling molecule by regulating the trafficking of other regulators.</text>
</comment>
<comment type="cofactor">
    <cofactor evidence="2">
        <name>Ca(2+)</name>
        <dbReference type="ChEBI" id="CHEBI:29108"/>
    </cofactor>
</comment>
<comment type="subcellular location">
    <subcellularLocation>
        <location evidence="4">Cell membrane</location>
        <topology evidence="1">Multi-pass membrane protein</topology>
    </subcellularLocation>
    <subcellularLocation>
        <location evidence="4">Cytoplasm</location>
    </subcellularLocation>
</comment>
<comment type="tissue specificity">
    <text evidence="4">Expressed in incipient leaf primordia.</text>
</comment>
<comment type="similarity">
    <text evidence="6">Belongs to the MCTP family.</text>
</comment>
<accession>Q9LZE5</accession>
<organism>
    <name type="scientific">Arabidopsis thaliana</name>
    <name type="common">Mouse-ear cress</name>
    <dbReference type="NCBI Taxonomy" id="3702"/>
    <lineage>
        <taxon>Eukaryota</taxon>
        <taxon>Viridiplantae</taxon>
        <taxon>Streptophyta</taxon>
        <taxon>Embryophyta</taxon>
        <taxon>Tracheophyta</taxon>
        <taxon>Spermatophyta</taxon>
        <taxon>Magnoliopsida</taxon>
        <taxon>eudicotyledons</taxon>
        <taxon>Gunneridae</taxon>
        <taxon>Pentapetalae</taxon>
        <taxon>rosids</taxon>
        <taxon>malvids</taxon>
        <taxon>Brassicales</taxon>
        <taxon>Brassicaceae</taxon>
        <taxon>Camelineae</taxon>
        <taxon>Arabidopsis</taxon>
    </lineage>
</organism>
<proteinExistence type="evidence at transcript level"/>
<evidence type="ECO:0000255" key="1"/>
<evidence type="ECO:0000255" key="2">
    <source>
        <dbReference type="PROSITE-ProRule" id="PRU00041"/>
    </source>
</evidence>
<evidence type="ECO:0000256" key="3">
    <source>
        <dbReference type="SAM" id="MobiDB-lite"/>
    </source>
</evidence>
<evidence type="ECO:0000269" key="4">
    <source>
    </source>
</evidence>
<evidence type="ECO:0000303" key="5">
    <source>
    </source>
</evidence>
<evidence type="ECO:0000305" key="6"/>
<evidence type="ECO:0000312" key="7">
    <source>
        <dbReference type="Araport" id="AT5G03435"/>
    </source>
</evidence>
<evidence type="ECO:0000312" key="8">
    <source>
        <dbReference type="EMBL" id="CAB83301.1"/>
    </source>
</evidence>
<reference key="1">
    <citation type="journal article" date="2000" name="Nature">
        <title>Sequence and analysis of chromosome 5 of the plant Arabidopsis thaliana.</title>
        <authorList>
            <person name="Tabata S."/>
            <person name="Kaneko T."/>
            <person name="Nakamura Y."/>
            <person name="Kotani H."/>
            <person name="Kato T."/>
            <person name="Asamizu E."/>
            <person name="Miyajima N."/>
            <person name="Sasamoto S."/>
            <person name="Kimura T."/>
            <person name="Hosouchi T."/>
            <person name="Kawashima K."/>
            <person name="Kohara M."/>
            <person name="Matsumoto M."/>
            <person name="Matsuno A."/>
            <person name="Muraki A."/>
            <person name="Nakayama S."/>
            <person name="Nakazaki N."/>
            <person name="Naruo K."/>
            <person name="Okumura S."/>
            <person name="Shinpo S."/>
            <person name="Takeuchi C."/>
            <person name="Wada T."/>
            <person name="Watanabe A."/>
            <person name="Yamada M."/>
            <person name="Yasuda M."/>
            <person name="Sato S."/>
            <person name="de la Bastide M."/>
            <person name="Huang E."/>
            <person name="Spiegel L."/>
            <person name="Gnoj L."/>
            <person name="O'Shaughnessy A."/>
            <person name="Preston R."/>
            <person name="Habermann K."/>
            <person name="Murray J."/>
            <person name="Johnson D."/>
            <person name="Rohlfing T."/>
            <person name="Nelson J."/>
            <person name="Stoneking T."/>
            <person name="Pepin K."/>
            <person name="Spieth J."/>
            <person name="Sekhon M."/>
            <person name="Armstrong J."/>
            <person name="Becker M."/>
            <person name="Belter E."/>
            <person name="Cordum H."/>
            <person name="Cordes M."/>
            <person name="Courtney L."/>
            <person name="Courtney W."/>
            <person name="Dante M."/>
            <person name="Du H."/>
            <person name="Edwards J."/>
            <person name="Fryman J."/>
            <person name="Haakensen B."/>
            <person name="Lamar E."/>
            <person name="Latreille P."/>
            <person name="Leonard S."/>
            <person name="Meyer R."/>
            <person name="Mulvaney E."/>
            <person name="Ozersky P."/>
            <person name="Riley A."/>
            <person name="Strowmatt C."/>
            <person name="Wagner-McPherson C."/>
            <person name="Wollam A."/>
            <person name="Yoakum M."/>
            <person name="Bell M."/>
            <person name="Dedhia N."/>
            <person name="Parnell L."/>
            <person name="Shah R."/>
            <person name="Rodriguez M."/>
            <person name="Hoon See L."/>
            <person name="Vil D."/>
            <person name="Baker J."/>
            <person name="Kirchoff K."/>
            <person name="Toth K."/>
            <person name="King L."/>
            <person name="Bahret A."/>
            <person name="Miller B."/>
            <person name="Marra M.A."/>
            <person name="Martienssen R."/>
            <person name="McCombie W.R."/>
            <person name="Wilson R.K."/>
            <person name="Murphy G."/>
            <person name="Bancroft I."/>
            <person name="Volckaert G."/>
            <person name="Wambutt R."/>
            <person name="Duesterhoeft A."/>
            <person name="Stiekema W."/>
            <person name="Pohl T."/>
            <person name="Entian K.-D."/>
            <person name="Terryn N."/>
            <person name="Hartley N."/>
            <person name="Bent E."/>
            <person name="Johnson S."/>
            <person name="Langham S.-A."/>
            <person name="McCullagh B."/>
            <person name="Robben J."/>
            <person name="Grymonprez B."/>
            <person name="Zimmermann W."/>
            <person name="Ramsperger U."/>
            <person name="Wedler H."/>
            <person name="Balke K."/>
            <person name="Wedler E."/>
            <person name="Peters S."/>
            <person name="van Staveren M."/>
            <person name="Dirkse W."/>
            <person name="Mooijman P."/>
            <person name="Klein Lankhorst R."/>
            <person name="Weitzenegger T."/>
            <person name="Bothe G."/>
            <person name="Rose M."/>
            <person name="Hauf J."/>
            <person name="Berneiser S."/>
            <person name="Hempel S."/>
            <person name="Feldpausch M."/>
            <person name="Lamberth S."/>
            <person name="Villarroel R."/>
            <person name="Gielen J."/>
            <person name="Ardiles W."/>
            <person name="Bents O."/>
            <person name="Lemcke K."/>
            <person name="Kolesov G."/>
            <person name="Mayer K.F.X."/>
            <person name="Rudd S."/>
            <person name="Schoof H."/>
            <person name="Schueller C."/>
            <person name="Zaccaria P."/>
            <person name="Mewes H.-W."/>
            <person name="Bevan M."/>
            <person name="Fransz P.F."/>
        </authorList>
    </citation>
    <scope>NUCLEOTIDE SEQUENCE [LARGE SCALE GENOMIC DNA]</scope>
    <source>
        <strain>cv. Columbia</strain>
    </source>
</reference>
<reference key="2">
    <citation type="journal article" date="2017" name="Plant J.">
        <title>Araport11: a complete reannotation of the Arabidopsis thaliana reference genome.</title>
        <authorList>
            <person name="Cheng C.Y."/>
            <person name="Krishnakumar V."/>
            <person name="Chan A.P."/>
            <person name="Thibaud-Nissen F."/>
            <person name="Schobel S."/>
            <person name="Town C.D."/>
        </authorList>
    </citation>
    <scope>GENOME REANNOTATION</scope>
    <source>
        <strain>cv. Columbia</strain>
    </source>
</reference>
<reference key="3">
    <citation type="journal article" date="2018" name="Plant Physiol.">
        <title>Characterization of multiple C2 domain and transmembrane region proteins in Arabidopsis.</title>
        <authorList>
            <person name="Liu L."/>
            <person name="Li C."/>
            <person name="Liang Z."/>
            <person name="Yu H."/>
        </authorList>
    </citation>
    <scope>TISSUE SPECIFICITY</scope>
    <scope>SUBCELLULAR LOCATION</scope>
    <scope>GENE FAMILY</scope>
    <scope>NOMENCLATURE</scope>
    <source>
        <strain>cv. Columbia</strain>
    </source>
</reference>